<evidence type="ECO:0000255" key="1">
    <source>
        <dbReference type="HAMAP-Rule" id="MF_01177"/>
    </source>
</evidence>
<accession>Q5E2D6</accession>
<sequence>MQLTNFTDFGLRALIYLGSLPEGELTSITVVTETFDVSRNHMVKIINKLGQEGYVKTIRGKNGGICLGKPADQIIIGDVIRAIEPLQVVNCAPEFCHITPACRLKGALAKAKQAFLDELDKHTIQDMLTDNSELLILLKRI</sequence>
<proteinExistence type="inferred from homology"/>
<gene>
    <name evidence="1" type="primary">nsrR</name>
    <name type="ordered locus">VF_2315</name>
</gene>
<reference key="1">
    <citation type="journal article" date="2005" name="Proc. Natl. Acad. Sci. U.S.A.">
        <title>Complete genome sequence of Vibrio fischeri: a symbiotic bacterium with pathogenic congeners.</title>
        <authorList>
            <person name="Ruby E.G."/>
            <person name="Urbanowski M."/>
            <person name="Campbell J."/>
            <person name="Dunn A."/>
            <person name="Faini M."/>
            <person name="Gunsalus R."/>
            <person name="Lostroh P."/>
            <person name="Lupp C."/>
            <person name="McCann J."/>
            <person name="Millikan D."/>
            <person name="Schaefer A."/>
            <person name="Stabb E."/>
            <person name="Stevens A."/>
            <person name="Visick K."/>
            <person name="Whistler C."/>
            <person name="Greenberg E.P."/>
        </authorList>
    </citation>
    <scope>NUCLEOTIDE SEQUENCE [LARGE SCALE GENOMIC DNA]</scope>
    <source>
        <strain>ATCC 700601 / ES114</strain>
    </source>
</reference>
<organism>
    <name type="scientific">Aliivibrio fischeri (strain ATCC 700601 / ES114)</name>
    <name type="common">Vibrio fischeri</name>
    <dbReference type="NCBI Taxonomy" id="312309"/>
    <lineage>
        <taxon>Bacteria</taxon>
        <taxon>Pseudomonadati</taxon>
        <taxon>Pseudomonadota</taxon>
        <taxon>Gammaproteobacteria</taxon>
        <taxon>Vibrionales</taxon>
        <taxon>Vibrionaceae</taxon>
        <taxon>Aliivibrio</taxon>
    </lineage>
</organism>
<keyword id="KW-0001">2Fe-2S</keyword>
<keyword id="KW-0238">DNA-binding</keyword>
<keyword id="KW-0408">Iron</keyword>
<keyword id="KW-0411">Iron-sulfur</keyword>
<keyword id="KW-0479">Metal-binding</keyword>
<keyword id="KW-1185">Reference proteome</keyword>
<keyword id="KW-0678">Repressor</keyword>
<keyword id="KW-0804">Transcription</keyword>
<keyword id="KW-0805">Transcription regulation</keyword>
<name>NSRR_ALIF1</name>
<protein>
    <recommendedName>
        <fullName evidence="1">HTH-type transcriptional repressor NsrR</fullName>
    </recommendedName>
</protein>
<comment type="function">
    <text evidence="1">Nitric oxide-sensitive repressor of genes involved in protecting the cell against nitrosative stress. May require iron for activity.</text>
</comment>
<comment type="cofactor">
    <cofactor evidence="1">
        <name>[2Fe-2S] cluster</name>
        <dbReference type="ChEBI" id="CHEBI:190135"/>
    </cofactor>
    <text evidence="1">Binds 1 [2Fe-2S] cluster per subunit.</text>
</comment>
<dbReference type="EMBL" id="CP000020">
    <property type="protein sequence ID" value="AAW86810.1"/>
    <property type="molecule type" value="Genomic_DNA"/>
</dbReference>
<dbReference type="RefSeq" id="WP_005421144.1">
    <property type="nucleotide sequence ID" value="NZ_CAWLES010000001.1"/>
</dbReference>
<dbReference type="RefSeq" id="YP_205698.1">
    <property type="nucleotide sequence ID" value="NC_006840.2"/>
</dbReference>
<dbReference type="SMR" id="Q5E2D6"/>
<dbReference type="STRING" id="312309.VF_2315"/>
<dbReference type="EnsemblBacteria" id="AAW86810">
    <property type="protein sequence ID" value="AAW86810"/>
    <property type="gene ID" value="VF_2315"/>
</dbReference>
<dbReference type="GeneID" id="54165031"/>
<dbReference type="KEGG" id="vfi:VF_2315"/>
<dbReference type="PATRIC" id="fig|312309.11.peg.2354"/>
<dbReference type="eggNOG" id="COG1959">
    <property type="taxonomic scope" value="Bacteria"/>
</dbReference>
<dbReference type="HOGENOM" id="CLU_107144_2_1_6"/>
<dbReference type="OrthoDB" id="9795923at2"/>
<dbReference type="Proteomes" id="UP000000537">
    <property type="component" value="Chromosome I"/>
</dbReference>
<dbReference type="CollecTF" id="EXPREG_00000e80"/>
<dbReference type="GO" id="GO:0005829">
    <property type="term" value="C:cytosol"/>
    <property type="evidence" value="ECO:0007669"/>
    <property type="project" value="TreeGrafter"/>
</dbReference>
<dbReference type="GO" id="GO:0032993">
    <property type="term" value="C:protein-DNA complex"/>
    <property type="evidence" value="ECO:0000315"/>
    <property type="project" value="CollecTF"/>
</dbReference>
<dbReference type="GO" id="GO:0051537">
    <property type="term" value="F:2 iron, 2 sulfur cluster binding"/>
    <property type="evidence" value="ECO:0007669"/>
    <property type="project" value="UniProtKB-KW"/>
</dbReference>
<dbReference type="GO" id="GO:0001217">
    <property type="term" value="F:DNA-binding transcription repressor activity"/>
    <property type="evidence" value="ECO:0000315"/>
    <property type="project" value="CollecTF"/>
</dbReference>
<dbReference type="GO" id="GO:0005506">
    <property type="term" value="F:iron ion binding"/>
    <property type="evidence" value="ECO:0007669"/>
    <property type="project" value="UniProtKB-UniRule"/>
</dbReference>
<dbReference type="GO" id="GO:0000976">
    <property type="term" value="F:transcription cis-regulatory region binding"/>
    <property type="evidence" value="ECO:0000315"/>
    <property type="project" value="CollecTF"/>
</dbReference>
<dbReference type="FunFam" id="1.10.10.10:FF:000105">
    <property type="entry name" value="HTH-type transcriptional repressor NsrR"/>
    <property type="match status" value="1"/>
</dbReference>
<dbReference type="Gene3D" id="1.10.10.10">
    <property type="entry name" value="Winged helix-like DNA-binding domain superfamily/Winged helix DNA-binding domain"/>
    <property type="match status" value="1"/>
</dbReference>
<dbReference type="HAMAP" id="MF_01177">
    <property type="entry name" value="HTH_type_NsrR"/>
    <property type="match status" value="1"/>
</dbReference>
<dbReference type="InterPro" id="IPR030489">
    <property type="entry name" value="TR_Rrf2-type_CS"/>
</dbReference>
<dbReference type="InterPro" id="IPR000944">
    <property type="entry name" value="Tscrpt_reg_Rrf2"/>
</dbReference>
<dbReference type="InterPro" id="IPR023761">
    <property type="entry name" value="Tscrpt_rep_HTH_NsrR"/>
</dbReference>
<dbReference type="InterPro" id="IPR036388">
    <property type="entry name" value="WH-like_DNA-bd_sf"/>
</dbReference>
<dbReference type="InterPro" id="IPR036390">
    <property type="entry name" value="WH_DNA-bd_sf"/>
</dbReference>
<dbReference type="NCBIfam" id="NF008240">
    <property type="entry name" value="PRK11014.1"/>
    <property type="match status" value="1"/>
</dbReference>
<dbReference type="NCBIfam" id="TIGR00738">
    <property type="entry name" value="rrf2_super"/>
    <property type="match status" value="1"/>
</dbReference>
<dbReference type="PANTHER" id="PTHR33221:SF4">
    <property type="entry name" value="HTH-TYPE TRANSCRIPTIONAL REPRESSOR NSRR"/>
    <property type="match status" value="1"/>
</dbReference>
<dbReference type="PANTHER" id="PTHR33221">
    <property type="entry name" value="WINGED HELIX-TURN-HELIX TRANSCRIPTIONAL REGULATOR, RRF2 FAMILY"/>
    <property type="match status" value="1"/>
</dbReference>
<dbReference type="Pfam" id="PF02082">
    <property type="entry name" value="Rrf2"/>
    <property type="match status" value="1"/>
</dbReference>
<dbReference type="SUPFAM" id="SSF46785">
    <property type="entry name" value="Winged helix' DNA-binding domain"/>
    <property type="match status" value="1"/>
</dbReference>
<dbReference type="PROSITE" id="PS01332">
    <property type="entry name" value="HTH_RRF2_1"/>
    <property type="match status" value="1"/>
</dbReference>
<dbReference type="PROSITE" id="PS51197">
    <property type="entry name" value="HTH_RRF2_2"/>
    <property type="match status" value="1"/>
</dbReference>
<feature type="chain" id="PRO_0000268951" description="HTH-type transcriptional repressor NsrR">
    <location>
        <begin position="1"/>
        <end position="141"/>
    </location>
</feature>
<feature type="domain" description="HTH rrf2-type" evidence="1">
    <location>
        <begin position="2"/>
        <end position="129"/>
    </location>
</feature>
<feature type="DNA-binding region" description="H-T-H motif" evidence="1">
    <location>
        <begin position="28"/>
        <end position="51"/>
    </location>
</feature>
<feature type="binding site" evidence="1">
    <location>
        <position position="91"/>
    </location>
    <ligand>
        <name>[2Fe-2S] cluster</name>
        <dbReference type="ChEBI" id="CHEBI:190135"/>
    </ligand>
</feature>
<feature type="binding site" evidence="1">
    <location>
        <position position="96"/>
    </location>
    <ligand>
        <name>[2Fe-2S] cluster</name>
        <dbReference type="ChEBI" id="CHEBI:190135"/>
    </ligand>
</feature>
<feature type="binding site" evidence="1">
    <location>
        <position position="102"/>
    </location>
    <ligand>
        <name>[2Fe-2S] cluster</name>
        <dbReference type="ChEBI" id="CHEBI:190135"/>
    </ligand>
</feature>